<protein>
    <recommendedName>
        <fullName evidence="1">Dual-action ribosomal maturation protein DarP</fullName>
    </recommendedName>
    <alternativeName>
        <fullName evidence="1">Large ribosomal subunit assembly factor DarP</fullName>
    </alternativeName>
</protein>
<reference key="1">
    <citation type="journal article" date="2000" name="Nature">
        <title>The genome sequence of the plant pathogen Xylella fastidiosa.</title>
        <authorList>
            <person name="Simpson A.J.G."/>
            <person name="Reinach F.C."/>
            <person name="Arruda P."/>
            <person name="Abreu F.A."/>
            <person name="Acencio M."/>
            <person name="Alvarenga R."/>
            <person name="Alves L.M.C."/>
            <person name="Araya J.E."/>
            <person name="Baia G.S."/>
            <person name="Baptista C.S."/>
            <person name="Barros M.H."/>
            <person name="Bonaccorsi E.D."/>
            <person name="Bordin S."/>
            <person name="Bove J.M."/>
            <person name="Briones M.R.S."/>
            <person name="Bueno M.R.P."/>
            <person name="Camargo A.A."/>
            <person name="Camargo L.E.A."/>
            <person name="Carraro D.M."/>
            <person name="Carrer H."/>
            <person name="Colauto N.B."/>
            <person name="Colombo C."/>
            <person name="Costa F.F."/>
            <person name="Costa M.C.R."/>
            <person name="Costa-Neto C.M."/>
            <person name="Coutinho L.L."/>
            <person name="Cristofani M."/>
            <person name="Dias-Neto E."/>
            <person name="Docena C."/>
            <person name="El-Dorry H."/>
            <person name="Facincani A.P."/>
            <person name="Ferreira A.J.S."/>
            <person name="Ferreira V.C.A."/>
            <person name="Ferro J.A."/>
            <person name="Fraga J.S."/>
            <person name="Franca S.C."/>
            <person name="Franco M.C."/>
            <person name="Frohme M."/>
            <person name="Furlan L.R."/>
            <person name="Garnier M."/>
            <person name="Goldman G.H."/>
            <person name="Goldman M.H.S."/>
            <person name="Gomes S.L."/>
            <person name="Gruber A."/>
            <person name="Ho P.L."/>
            <person name="Hoheisel J.D."/>
            <person name="Junqueira M.L."/>
            <person name="Kemper E.L."/>
            <person name="Kitajima J.P."/>
            <person name="Krieger J.E."/>
            <person name="Kuramae E.E."/>
            <person name="Laigret F."/>
            <person name="Lambais M.R."/>
            <person name="Leite L.C.C."/>
            <person name="Lemos E.G.M."/>
            <person name="Lemos M.V.F."/>
            <person name="Lopes S.A."/>
            <person name="Lopes C.R."/>
            <person name="Machado J.A."/>
            <person name="Machado M.A."/>
            <person name="Madeira A.M.B.N."/>
            <person name="Madeira H.M.F."/>
            <person name="Marino C.L."/>
            <person name="Marques M.V."/>
            <person name="Martins E.A.L."/>
            <person name="Martins E.M.F."/>
            <person name="Matsukuma A.Y."/>
            <person name="Menck C.F.M."/>
            <person name="Miracca E.C."/>
            <person name="Miyaki C.Y."/>
            <person name="Monteiro-Vitorello C.B."/>
            <person name="Moon D.H."/>
            <person name="Nagai M.A."/>
            <person name="Nascimento A.L.T.O."/>
            <person name="Netto L.E.S."/>
            <person name="Nhani A. Jr."/>
            <person name="Nobrega F.G."/>
            <person name="Nunes L.R."/>
            <person name="Oliveira M.A."/>
            <person name="de Oliveira M.C."/>
            <person name="de Oliveira R.C."/>
            <person name="Palmieri D.A."/>
            <person name="Paris A."/>
            <person name="Peixoto B.R."/>
            <person name="Pereira G.A.G."/>
            <person name="Pereira H.A. Jr."/>
            <person name="Pesquero J.B."/>
            <person name="Quaggio R.B."/>
            <person name="Roberto P.G."/>
            <person name="Rodrigues V."/>
            <person name="de Rosa A.J.M."/>
            <person name="de Rosa V.E. Jr."/>
            <person name="de Sa R.G."/>
            <person name="Santelli R.V."/>
            <person name="Sawasaki H.E."/>
            <person name="da Silva A.C.R."/>
            <person name="da Silva A.M."/>
            <person name="da Silva F.R."/>
            <person name="Silva W.A. Jr."/>
            <person name="da Silveira J.F."/>
            <person name="Silvestri M.L.Z."/>
            <person name="Siqueira W.J."/>
            <person name="de Souza A.A."/>
            <person name="de Souza A.P."/>
            <person name="Terenzi M.F."/>
            <person name="Truffi D."/>
            <person name="Tsai S.M."/>
            <person name="Tsuhako M.H."/>
            <person name="Vallada H."/>
            <person name="Van Sluys M.A."/>
            <person name="Verjovski-Almeida S."/>
            <person name="Vettore A.L."/>
            <person name="Zago M.A."/>
            <person name="Zatz M."/>
            <person name="Meidanis J."/>
            <person name="Setubal J.C."/>
        </authorList>
    </citation>
    <scope>NUCLEOTIDE SEQUENCE [LARGE SCALE GENOMIC DNA]</scope>
    <source>
        <strain>9a5c</strain>
    </source>
</reference>
<accession>Q9PE98</accession>
<comment type="function">
    <text evidence="1">Member of a network of 50S ribosomal subunit biogenesis factors which assembles along the 30S-50S interface, preventing incorrect 23S rRNA structures from forming. Promotes peptidyl transferase center (PTC) maturation.</text>
</comment>
<comment type="subcellular location">
    <subcellularLocation>
        <location evidence="1">Cytoplasm</location>
    </subcellularLocation>
    <text evidence="1">Associates with late stage pre-50S ribosomal subunits.</text>
</comment>
<comment type="similarity">
    <text evidence="1">Belongs to the DarP family.</text>
</comment>
<organism>
    <name type="scientific">Xylella fastidiosa (strain 9a5c)</name>
    <dbReference type="NCBI Taxonomy" id="160492"/>
    <lineage>
        <taxon>Bacteria</taxon>
        <taxon>Pseudomonadati</taxon>
        <taxon>Pseudomonadota</taxon>
        <taxon>Gammaproteobacteria</taxon>
        <taxon>Lysobacterales</taxon>
        <taxon>Lysobacteraceae</taxon>
        <taxon>Xylella</taxon>
    </lineage>
</organism>
<proteinExistence type="inferred from homology"/>
<sequence>MWKNGAMRGCNKETGEFLGPSRSQQRRTALEVLVLSEKLAALTPAQLAKLPIPERLLPHITETKRITSHIARKRQLAFLAKQMRREDDTTLETIREKLDASGIQAQREVATLHRTEQWRKRLLEEGDSALTELLNQYPQADCGKLRQLLRNTKTEQARNKPPQAFRELYQVLHGLIITQNSDNQH</sequence>
<feature type="chain" id="PRO_0000208237" description="Dual-action ribosomal maturation protein DarP">
    <location>
        <begin position="1"/>
        <end position="185"/>
    </location>
</feature>
<feature type="region of interest" description="Disordered" evidence="2">
    <location>
        <begin position="1"/>
        <end position="22"/>
    </location>
</feature>
<dbReference type="EMBL" id="AE003849">
    <property type="protein sequence ID" value="AAF83940.1"/>
    <property type="molecule type" value="Genomic_DNA"/>
</dbReference>
<dbReference type="PIR" id="A82719">
    <property type="entry name" value="A82719"/>
</dbReference>
<dbReference type="SMR" id="Q9PE98"/>
<dbReference type="STRING" id="160492.XF_1130"/>
<dbReference type="KEGG" id="xfa:XF_1130"/>
<dbReference type="eggNOG" id="COG3028">
    <property type="taxonomic scope" value="Bacteria"/>
</dbReference>
<dbReference type="HOGENOM" id="CLU_106757_0_0_6"/>
<dbReference type="Proteomes" id="UP000000812">
    <property type="component" value="Chromosome"/>
</dbReference>
<dbReference type="GO" id="GO:0005829">
    <property type="term" value="C:cytosol"/>
    <property type="evidence" value="ECO:0007669"/>
    <property type="project" value="TreeGrafter"/>
</dbReference>
<dbReference type="GO" id="GO:0043022">
    <property type="term" value="F:ribosome binding"/>
    <property type="evidence" value="ECO:0007669"/>
    <property type="project" value="UniProtKB-UniRule"/>
</dbReference>
<dbReference type="GO" id="GO:0019843">
    <property type="term" value="F:rRNA binding"/>
    <property type="evidence" value="ECO:0007669"/>
    <property type="project" value="UniProtKB-UniRule"/>
</dbReference>
<dbReference type="GO" id="GO:1902626">
    <property type="term" value="P:assembly of large subunit precursor of preribosome"/>
    <property type="evidence" value="ECO:0007669"/>
    <property type="project" value="UniProtKB-UniRule"/>
</dbReference>
<dbReference type="CDD" id="cd16331">
    <property type="entry name" value="YjgA-like"/>
    <property type="match status" value="1"/>
</dbReference>
<dbReference type="Gene3D" id="1.10.60.30">
    <property type="entry name" value="PSPTO4464-like domains"/>
    <property type="match status" value="2"/>
</dbReference>
<dbReference type="HAMAP" id="MF_00765">
    <property type="entry name" value="DarP"/>
    <property type="match status" value="1"/>
</dbReference>
<dbReference type="InterPro" id="IPR006839">
    <property type="entry name" value="DarP"/>
</dbReference>
<dbReference type="InterPro" id="IPR023153">
    <property type="entry name" value="DarP_sf"/>
</dbReference>
<dbReference type="NCBIfam" id="NF003593">
    <property type="entry name" value="PRK05255.1-1"/>
    <property type="match status" value="1"/>
</dbReference>
<dbReference type="PANTHER" id="PTHR38101">
    <property type="entry name" value="UPF0307 PROTEIN YJGA"/>
    <property type="match status" value="1"/>
</dbReference>
<dbReference type="PANTHER" id="PTHR38101:SF1">
    <property type="entry name" value="UPF0307 PROTEIN YJGA"/>
    <property type="match status" value="1"/>
</dbReference>
<dbReference type="Pfam" id="PF04751">
    <property type="entry name" value="DarP"/>
    <property type="match status" value="1"/>
</dbReference>
<dbReference type="PIRSF" id="PIRSF016183">
    <property type="entry name" value="UCP016183"/>
    <property type="match status" value="1"/>
</dbReference>
<dbReference type="SUPFAM" id="SSF158710">
    <property type="entry name" value="PSPTO4464-like"/>
    <property type="match status" value="1"/>
</dbReference>
<keyword id="KW-0963">Cytoplasm</keyword>
<keyword id="KW-0690">Ribosome biogenesis</keyword>
<keyword id="KW-0694">RNA-binding</keyword>
<keyword id="KW-0699">rRNA-binding</keyword>
<name>DARP_XYLFA</name>
<evidence type="ECO:0000255" key="1">
    <source>
        <dbReference type="HAMAP-Rule" id="MF_00765"/>
    </source>
</evidence>
<evidence type="ECO:0000256" key="2">
    <source>
        <dbReference type="SAM" id="MobiDB-lite"/>
    </source>
</evidence>
<gene>
    <name evidence="1" type="primary">darP</name>
    <name type="ordered locus">XF_1130</name>
</gene>